<evidence type="ECO:0000256" key="1">
    <source>
        <dbReference type="SAM" id="MobiDB-lite"/>
    </source>
</evidence>
<evidence type="ECO:0000305" key="2"/>
<reference key="1">
    <citation type="journal article" date="2004" name="Nat. Genet.">
        <title>Complete sequencing and characterization of 21,243 full-length human cDNAs.</title>
        <authorList>
            <person name="Ota T."/>
            <person name="Suzuki Y."/>
            <person name="Nishikawa T."/>
            <person name="Otsuki T."/>
            <person name="Sugiyama T."/>
            <person name="Irie R."/>
            <person name="Wakamatsu A."/>
            <person name="Hayashi K."/>
            <person name="Sato H."/>
            <person name="Nagai K."/>
            <person name="Kimura K."/>
            <person name="Makita H."/>
            <person name="Sekine M."/>
            <person name="Obayashi M."/>
            <person name="Nishi T."/>
            <person name="Shibahara T."/>
            <person name="Tanaka T."/>
            <person name="Ishii S."/>
            <person name="Yamamoto J."/>
            <person name="Saito K."/>
            <person name="Kawai Y."/>
            <person name="Isono Y."/>
            <person name="Nakamura Y."/>
            <person name="Nagahari K."/>
            <person name="Murakami K."/>
            <person name="Yasuda T."/>
            <person name="Iwayanagi T."/>
            <person name="Wagatsuma M."/>
            <person name="Shiratori A."/>
            <person name="Sudo H."/>
            <person name="Hosoiri T."/>
            <person name="Kaku Y."/>
            <person name="Kodaira H."/>
            <person name="Kondo H."/>
            <person name="Sugawara M."/>
            <person name="Takahashi M."/>
            <person name="Kanda K."/>
            <person name="Yokoi T."/>
            <person name="Furuya T."/>
            <person name="Kikkawa E."/>
            <person name="Omura Y."/>
            <person name="Abe K."/>
            <person name="Kamihara K."/>
            <person name="Katsuta N."/>
            <person name="Sato K."/>
            <person name="Tanikawa M."/>
            <person name="Yamazaki M."/>
            <person name="Ninomiya K."/>
            <person name="Ishibashi T."/>
            <person name="Yamashita H."/>
            <person name="Murakawa K."/>
            <person name="Fujimori K."/>
            <person name="Tanai H."/>
            <person name="Kimata M."/>
            <person name="Watanabe M."/>
            <person name="Hiraoka S."/>
            <person name="Chiba Y."/>
            <person name="Ishida S."/>
            <person name="Ono Y."/>
            <person name="Takiguchi S."/>
            <person name="Watanabe S."/>
            <person name="Yosida M."/>
            <person name="Hotuta T."/>
            <person name="Kusano J."/>
            <person name="Kanehori K."/>
            <person name="Takahashi-Fujii A."/>
            <person name="Hara H."/>
            <person name="Tanase T.-O."/>
            <person name="Nomura Y."/>
            <person name="Togiya S."/>
            <person name="Komai F."/>
            <person name="Hara R."/>
            <person name="Takeuchi K."/>
            <person name="Arita M."/>
            <person name="Imose N."/>
            <person name="Musashino K."/>
            <person name="Yuuki H."/>
            <person name="Oshima A."/>
            <person name="Sasaki N."/>
            <person name="Aotsuka S."/>
            <person name="Yoshikawa Y."/>
            <person name="Matsunawa H."/>
            <person name="Ichihara T."/>
            <person name="Shiohata N."/>
            <person name="Sano S."/>
            <person name="Moriya S."/>
            <person name="Momiyama H."/>
            <person name="Satoh N."/>
            <person name="Takami S."/>
            <person name="Terashima Y."/>
            <person name="Suzuki O."/>
            <person name="Nakagawa S."/>
            <person name="Senoh A."/>
            <person name="Mizoguchi H."/>
            <person name="Goto Y."/>
            <person name="Shimizu F."/>
            <person name="Wakebe H."/>
            <person name="Hishigaki H."/>
            <person name="Watanabe T."/>
            <person name="Sugiyama A."/>
            <person name="Takemoto M."/>
            <person name="Kawakami B."/>
            <person name="Yamazaki M."/>
            <person name="Watanabe K."/>
            <person name="Kumagai A."/>
            <person name="Itakura S."/>
            <person name="Fukuzumi Y."/>
            <person name="Fujimori Y."/>
            <person name="Komiyama M."/>
            <person name="Tashiro H."/>
            <person name="Tanigami A."/>
            <person name="Fujiwara T."/>
            <person name="Ono T."/>
            <person name="Yamada K."/>
            <person name="Fujii Y."/>
            <person name="Ozaki K."/>
            <person name="Hirao M."/>
            <person name="Ohmori Y."/>
            <person name="Kawabata A."/>
            <person name="Hikiji T."/>
            <person name="Kobatake N."/>
            <person name="Inagaki H."/>
            <person name="Ikema Y."/>
            <person name="Okamoto S."/>
            <person name="Okitani R."/>
            <person name="Kawakami T."/>
            <person name="Noguchi S."/>
            <person name="Itoh T."/>
            <person name="Shigeta K."/>
            <person name="Senba T."/>
            <person name="Matsumura K."/>
            <person name="Nakajima Y."/>
            <person name="Mizuno T."/>
            <person name="Morinaga M."/>
            <person name="Sasaki M."/>
            <person name="Togashi T."/>
            <person name="Oyama M."/>
            <person name="Hata H."/>
            <person name="Watanabe M."/>
            <person name="Komatsu T."/>
            <person name="Mizushima-Sugano J."/>
            <person name="Satoh T."/>
            <person name="Shirai Y."/>
            <person name="Takahashi Y."/>
            <person name="Nakagawa K."/>
            <person name="Okumura K."/>
            <person name="Nagase T."/>
            <person name="Nomura N."/>
            <person name="Kikuchi H."/>
            <person name="Masuho Y."/>
            <person name="Yamashita R."/>
            <person name="Nakai K."/>
            <person name="Yada T."/>
            <person name="Nakamura Y."/>
            <person name="Ohara O."/>
            <person name="Isogai T."/>
            <person name="Sugano S."/>
        </authorList>
    </citation>
    <scope>NUCLEOTIDE SEQUENCE [LARGE SCALE MRNA]</scope>
    <source>
        <tissue>Testis</tissue>
    </source>
</reference>
<reference key="2">
    <citation type="journal article" date="2003" name="Nature">
        <title>The DNA sequence and analysis of human chromosome 14.</title>
        <authorList>
            <person name="Heilig R."/>
            <person name="Eckenberg R."/>
            <person name="Petit J.-L."/>
            <person name="Fonknechten N."/>
            <person name="Da Silva C."/>
            <person name="Cattolico L."/>
            <person name="Levy M."/>
            <person name="Barbe V."/>
            <person name="De Berardinis V."/>
            <person name="Ureta-Vidal A."/>
            <person name="Pelletier E."/>
            <person name="Vico V."/>
            <person name="Anthouard V."/>
            <person name="Rowen L."/>
            <person name="Madan A."/>
            <person name="Qin S."/>
            <person name="Sun H."/>
            <person name="Du H."/>
            <person name="Pepin K."/>
            <person name="Artiguenave F."/>
            <person name="Robert C."/>
            <person name="Cruaud C."/>
            <person name="Bruels T."/>
            <person name="Jaillon O."/>
            <person name="Friedlander L."/>
            <person name="Samson G."/>
            <person name="Brottier P."/>
            <person name="Cure S."/>
            <person name="Segurens B."/>
            <person name="Aniere F."/>
            <person name="Samain S."/>
            <person name="Crespeau H."/>
            <person name="Abbasi N."/>
            <person name="Aiach N."/>
            <person name="Boscus D."/>
            <person name="Dickhoff R."/>
            <person name="Dors M."/>
            <person name="Dubois I."/>
            <person name="Friedman C."/>
            <person name="Gouyvenoux M."/>
            <person name="James R."/>
            <person name="Madan A."/>
            <person name="Mairey-Estrada B."/>
            <person name="Mangenot S."/>
            <person name="Martins N."/>
            <person name="Menard M."/>
            <person name="Oztas S."/>
            <person name="Ratcliffe A."/>
            <person name="Shaffer T."/>
            <person name="Trask B."/>
            <person name="Vacherie B."/>
            <person name="Bellemere C."/>
            <person name="Belser C."/>
            <person name="Besnard-Gonnet M."/>
            <person name="Bartol-Mavel D."/>
            <person name="Boutard M."/>
            <person name="Briez-Silla S."/>
            <person name="Combette S."/>
            <person name="Dufosse-Laurent V."/>
            <person name="Ferron C."/>
            <person name="Lechaplais C."/>
            <person name="Louesse C."/>
            <person name="Muselet D."/>
            <person name="Magdelenat G."/>
            <person name="Pateau E."/>
            <person name="Petit E."/>
            <person name="Sirvain-Trukniewicz P."/>
            <person name="Trybou A."/>
            <person name="Vega-Czarny N."/>
            <person name="Bataille E."/>
            <person name="Bluet E."/>
            <person name="Bordelais I."/>
            <person name="Dubois M."/>
            <person name="Dumont C."/>
            <person name="Guerin T."/>
            <person name="Haffray S."/>
            <person name="Hammadi R."/>
            <person name="Muanga J."/>
            <person name="Pellouin V."/>
            <person name="Robert D."/>
            <person name="Wunderle E."/>
            <person name="Gauguet G."/>
            <person name="Roy A."/>
            <person name="Sainte-Marthe L."/>
            <person name="Verdier J."/>
            <person name="Verdier-Discala C."/>
            <person name="Hillier L.W."/>
            <person name="Fulton L."/>
            <person name="McPherson J."/>
            <person name="Matsuda F."/>
            <person name="Wilson R."/>
            <person name="Scarpelli C."/>
            <person name="Gyapay G."/>
            <person name="Wincker P."/>
            <person name="Saurin W."/>
            <person name="Quetier F."/>
            <person name="Waterston R."/>
            <person name="Hood L."/>
            <person name="Weissenbach J."/>
        </authorList>
    </citation>
    <scope>NUCLEOTIDE SEQUENCE [LARGE SCALE GENOMIC DNA]</scope>
</reference>
<reference key="3">
    <citation type="journal article" date="2004" name="Genome Res.">
        <title>The status, quality, and expansion of the NIH full-length cDNA project: the Mammalian Gene Collection (MGC).</title>
        <authorList>
            <consortium name="The MGC Project Team"/>
        </authorList>
    </citation>
    <scope>NUCLEOTIDE SEQUENCE [LARGE SCALE MRNA]</scope>
    <source>
        <tissue>Testis</tissue>
    </source>
</reference>
<reference key="4">
    <citation type="journal article" date="2010" name="Mol. Cell. Proteomics">
        <title>Systematic mapping and functional analysis of a family of human epididymal secretory sperm-located proteins.</title>
        <authorList>
            <person name="Li J."/>
            <person name="Liu F."/>
            <person name="Wang H."/>
            <person name="Liu X."/>
            <person name="Liu J."/>
            <person name="Li N."/>
            <person name="Wan F."/>
            <person name="Wang W."/>
            <person name="Zhang C."/>
            <person name="Jin S."/>
            <person name="Liu J."/>
            <person name="Zhu P."/>
            <person name="Liu Y."/>
        </authorList>
    </citation>
    <scope>NUCLEOTIDE SEQUENCE [MRNA] OF 48-1026</scope>
</reference>
<dbReference type="EMBL" id="AK302564">
    <property type="protein sequence ID" value="BAH13745.1"/>
    <property type="molecule type" value="mRNA"/>
</dbReference>
<dbReference type="EMBL" id="AC005225">
    <property type="status" value="NOT_ANNOTATED_CDS"/>
    <property type="molecule type" value="Genomic_DNA"/>
</dbReference>
<dbReference type="EMBL" id="AC005280">
    <property type="status" value="NOT_ANNOTATED_CDS"/>
    <property type="molecule type" value="Genomic_DNA"/>
</dbReference>
<dbReference type="EMBL" id="BC047590">
    <property type="protein sequence ID" value="AAH47590.1"/>
    <property type="status" value="ALT_SEQ"/>
    <property type="molecule type" value="mRNA"/>
</dbReference>
<dbReference type="EMBL" id="GU727638">
    <property type="protein sequence ID" value="ADU87640.1"/>
    <property type="molecule type" value="mRNA"/>
</dbReference>
<dbReference type="CCDS" id="CCDS9815.2"/>
<dbReference type="RefSeq" id="NP_001207413.1">
    <property type="nucleotide sequence ID" value="NM_001220484.1"/>
</dbReference>
<dbReference type="RefSeq" id="NP_976054.2">
    <property type="nucleotide sequence ID" value="NM_203309.2"/>
</dbReference>
<dbReference type="RefSeq" id="XP_006720206.1">
    <property type="nucleotide sequence ID" value="XM_006720143.2"/>
</dbReference>
<dbReference type="RefSeq" id="XP_011535062.1">
    <property type="nucleotide sequence ID" value="XM_011536760.2"/>
</dbReference>
<dbReference type="RefSeq" id="XP_016876778.1">
    <property type="nucleotide sequence ID" value="XM_017021289.1"/>
</dbReference>
<dbReference type="RefSeq" id="XP_047287326.1">
    <property type="nucleotide sequence ID" value="XM_047431370.1"/>
</dbReference>
<dbReference type="RefSeq" id="XP_054232016.1">
    <property type="nucleotide sequence ID" value="XM_054376041.1"/>
</dbReference>
<dbReference type="RefSeq" id="XP_054232017.1">
    <property type="nucleotide sequence ID" value="XM_054376042.1"/>
</dbReference>
<dbReference type="RefSeq" id="XP_054232018.1">
    <property type="nucleotide sequence ID" value="XM_054376043.1"/>
</dbReference>
<dbReference type="SMR" id="Q86WZ0"/>
<dbReference type="BioGRID" id="134383">
    <property type="interactions" value="2"/>
</dbReference>
<dbReference type="FunCoup" id="Q86WZ0">
    <property type="interactions" value="15"/>
</dbReference>
<dbReference type="IntAct" id="Q86WZ0">
    <property type="interactions" value="2"/>
</dbReference>
<dbReference type="STRING" id="9606.ENSP00000450444"/>
<dbReference type="GlyGen" id="Q86WZ0">
    <property type="glycosylation" value="4 sites, 1 O-linked glycan (2 sites)"/>
</dbReference>
<dbReference type="iPTMnet" id="Q86WZ0"/>
<dbReference type="PhosphoSitePlus" id="Q86WZ0"/>
<dbReference type="SwissPalm" id="Q86WZ0"/>
<dbReference type="BioMuta" id="HEATR4"/>
<dbReference type="DMDM" id="347595657"/>
<dbReference type="jPOST" id="Q86WZ0"/>
<dbReference type="MassIVE" id="Q86WZ0"/>
<dbReference type="PaxDb" id="9606-ENSP00000450444"/>
<dbReference type="PeptideAtlas" id="Q86WZ0"/>
<dbReference type="ProteomicsDB" id="70215"/>
<dbReference type="Antibodypedia" id="171">
    <property type="antibodies" value="71 antibodies from 19 providers"/>
</dbReference>
<dbReference type="DNASU" id="399671"/>
<dbReference type="Ensembl" id="ENST00000334988.2">
    <property type="protein sequence ID" value="ENSP00000335447.2"/>
    <property type="gene ID" value="ENSG00000187105.9"/>
</dbReference>
<dbReference type="Ensembl" id="ENST00000553558.6">
    <property type="protein sequence ID" value="ENSP00000450444.2"/>
    <property type="gene ID" value="ENSG00000187105.9"/>
</dbReference>
<dbReference type="GeneID" id="399671"/>
<dbReference type="KEGG" id="hsa:399671"/>
<dbReference type="MANE-Select" id="ENST00000553558.6">
    <property type="protein sequence ID" value="ENSP00000450444.2"/>
    <property type="RefSeq nucleotide sequence ID" value="NM_001220484.1"/>
    <property type="RefSeq protein sequence ID" value="NP_001207413.1"/>
</dbReference>
<dbReference type="UCSC" id="uc021rwe.2">
    <property type="organism name" value="human"/>
</dbReference>
<dbReference type="AGR" id="HGNC:16761"/>
<dbReference type="CTD" id="399671"/>
<dbReference type="DisGeNET" id="399671"/>
<dbReference type="GeneCards" id="HEATR4"/>
<dbReference type="HGNC" id="HGNC:16761">
    <property type="gene designation" value="HEATR4"/>
</dbReference>
<dbReference type="HPA" id="ENSG00000187105">
    <property type="expression patterns" value="Tissue enhanced (testis)"/>
</dbReference>
<dbReference type="neXtProt" id="NX_Q86WZ0"/>
<dbReference type="OpenTargets" id="ENSG00000187105"/>
<dbReference type="PharmGKB" id="PA162390631"/>
<dbReference type="VEuPathDB" id="HostDB:ENSG00000187105"/>
<dbReference type="eggNOG" id="ENOG502QPUU">
    <property type="taxonomic scope" value="Eukaryota"/>
</dbReference>
<dbReference type="GeneTree" id="ENSGT00390000013207"/>
<dbReference type="HOGENOM" id="CLU_012662_0_0_1"/>
<dbReference type="InParanoid" id="Q86WZ0"/>
<dbReference type="OMA" id="YATQSHN"/>
<dbReference type="OrthoDB" id="9530827at2759"/>
<dbReference type="PAN-GO" id="Q86WZ0">
    <property type="GO annotations" value="1 GO annotation based on evolutionary models"/>
</dbReference>
<dbReference type="PhylomeDB" id="Q86WZ0"/>
<dbReference type="TreeFam" id="TF329278"/>
<dbReference type="PathwayCommons" id="Q86WZ0"/>
<dbReference type="SignaLink" id="Q86WZ0"/>
<dbReference type="BioGRID-ORCS" id="399671">
    <property type="hits" value="9 hits in 1136 CRISPR screens"/>
</dbReference>
<dbReference type="ChiTaRS" id="HEATR4">
    <property type="organism name" value="human"/>
</dbReference>
<dbReference type="GenomeRNAi" id="399671"/>
<dbReference type="Pharos" id="Q86WZ0">
    <property type="development level" value="Tdark"/>
</dbReference>
<dbReference type="PRO" id="PR:Q86WZ0"/>
<dbReference type="Proteomes" id="UP000005640">
    <property type="component" value="Chromosome 14"/>
</dbReference>
<dbReference type="RNAct" id="Q86WZ0">
    <property type="molecule type" value="protein"/>
</dbReference>
<dbReference type="Bgee" id="ENSG00000187105">
    <property type="expression patterns" value="Expressed in right testis and 100 other cell types or tissues"/>
</dbReference>
<dbReference type="ExpressionAtlas" id="Q86WZ0">
    <property type="expression patterns" value="baseline and differential"/>
</dbReference>
<dbReference type="GO" id="GO:0016491">
    <property type="term" value="F:oxidoreductase activity"/>
    <property type="evidence" value="ECO:0000318"/>
    <property type="project" value="GO_Central"/>
</dbReference>
<dbReference type="Gene3D" id="1.25.10.10">
    <property type="entry name" value="Leucine-rich Repeat Variant"/>
    <property type="match status" value="2"/>
</dbReference>
<dbReference type="InterPro" id="IPR011989">
    <property type="entry name" value="ARM-like"/>
</dbReference>
<dbReference type="InterPro" id="IPR016024">
    <property type="entry name" value="ARM-type_fold"/>
</dbReference>
<dbReference type="InterPro" id="IPR000357">
    <property type="entry name" value="HEAT"/>
</dbReference>
<dbReference type="PANTHER" id="PTHR12697:SF20">
    <property type="entry name" value="HEAT REPEAT-CONTAINING PROTEIN 4"/>
    <property type="match status" value="1"/>
</dbReference>
<dbReference type="PANTHER" id="PTHR12697">
    <property type="entry name" value="PBS LYASE HEAT-LIKE PROTEIN"/>
    <property type="match status" value="1"/>
</dbReference>
<dbReference type="Pfam" id="PF02985">
    <property type="entry name" value="HEAT"/>
    <property type="match status" value="1"/>
</dbReference>
<dbReference type="Pfam" id="PF13646">
    <property type="entry name" value="HEAT_2"/>
    <property type="match status" value="1"/>
</dbReference>
<dbReference type="SUPFAM" id="SSF48371">
    <property type="entry name" value="ARM repeat"/>
    <property type="match status" value="1"/>
</dbReference>
<proteinExistence type="evidence at protein level"/>
<feature type="chain" id="PRO_0000254129" description="HEAT repeat-containing protein 4">
    <location>
        <begin position="1"/>
        <end position="1026"/>
    </location>
</feature>
<feature type="repeat" description="HEAT 1">
    <location>
        <begin position="530"/>
        <end position="568"/>
    </location>
</feature>
<feature type="repeat" description="HEAT 2">
    <location>
        <begin position="724"/>
        <end position="760"/>
    </location>
</feature>
<feature type="repeat" description="HEAT 3">
    <location>
        <begin position="761"/>
        <end position="794"/>
    </location>
</feature>
<feature type="region of interest" description="Disordered" evidence="1">
    <location>
        <begin position="135"/>
        <end position="175"/>
    </location>
</feature>
<feature type="sequence variant" id="VAR_028817" description="In dbSNP:rs12894435.">
    <original>L</original>
    <variation>H</variation>
    <location>
        <position position="634"/>
    </location>
</feature>
<feature type="sequence variant" id="VAR_028818" description="In dbSNP:rs12894425.">
    <original>W</original>
    <variation>G</variation>
    <location>
        <position position="643"/>
    </location>
</feature>
<feature type="sequence variant" id="VAR_028819" description="In dbSNP:rs12894400.">
    <original>V</original>
    <variation>A</variation>
    <location>
        <position position="660"/>
    </location>
</feature>
<protein>
    <recommendedName>
        <fullName>HEAT repeat-containing protein 4</fullName>
    </recommendedName>
</protein>
<sequence length="1026" mass="117175">MTRTQKGKTFLPHCFYQSLPPRLGWGMILNYSKLKGKEECASVSSVPMVFFSSQYRLHRKSQYLKMAAANLTFSQEVVWQRGLPSIPYSQYSFDHLYNTNDIIHTPQIRKARPQKPVSFKFLGSSSPLTGDTSLAVKTESSANPEKKLKKSKPASTVREAPRPLIHHPCMHPDMLGRPPSLDVNLEEREAWLLPPEKEARAWEATVLEKLNERTARWIQSKRPRRPGASPNKWQSFLRQQYDWSHIRDELTSASDLELLKQLEAEETAEFEDQSVILPPQEKKKPELLLPVYYRLPSYFQQAETVEIMPGNKSTEDIHEKTSLSQPQTQSYFRQVTPRAGKFAYSTDNTFEQEIYFDEVQIIHQIGAKRDQIVLENLNRYNKQLSKVFPETPEKWSAQAIPEASYRPVQGALRWTALPTPAKDMLLQVGEKDVPIKTRRLKKQAKSLQEDVTWELVVLRRMLKEWKTAWALIIEWHHETVENLLQSLGDLHDDVRIKAITTCATAALERPRIATSQRDSDKTIQDLPEVLLPALEAALCDKNAHVRMAAAICQYAIQSHNPLARNIMQTALLKGNSVDSWAAAQCLALEGTATYPVIKRILHQLFTKKNEDTEEQSYILLSYLSEKTTLIHTMLAVELNSCQWKNRIVACQAFSRISGNVCLDMKHKLIQLMWNDWNKEVRRAAAQALGQMSLGKEVHDIIRVKLGQGNSQERVEALYLIGELKLMTAKLLPSFLHCFSDDFTAVRRAACLAAGALQIRDKMVLECLLNLMQRDPYWKIKAFAIRALGQIGQVSPELTDLLLWAIHYEESPGVRLEACRSILALKLQGDRVRDTFLDVLLLENHDAVLKEMYQTMKILNLGNEGNQEMLQEIKNRIKTLSQKDLLTHKILKLEMVMGKVREEAKRVYLKPKGEQGPLTLQTLLQETFQDEMVLPRRPSEVCDTEAVIKPVKPRAPNPWLQSSVPGLTTRSKVRSSLVKDLRTSPEKRIAVGPFRSDYPALYLGKFSERTFFSPIMSSPSGKKGAHL</sequence>
<name>HEAT4_HUMAN</name>
<organism>
    <name type="scientific">Homo sapiens</name>
    <name type="common">Human</name>
    <dbReference type="NCBI Taxonomy" id="9606"/>
    <lineage>
        <taxon>Eukaryota</taxon>
        <taxon>Metazoa</taxon>
        <taxon>Chordata</taxon>
        <taxon>Craniata</taxon>
        <taxon>Vertebrata</taxon>
        <taxon>Euteleostomi</taxon>
        <taxon>Mammalia</taxon>
        <taxon>Eutheria</taxon>
        <taxon>Euarchontoglires</taxon>
        <taxon>Primates</taxon>
        <taxon>Haplorrhini</taxon>
        <taxon>Catarrhini</taxon>
        <taxon>Hominidae</taxon>
        <taxon>Homo</taxon>
    </lineage>
</organism>
<gene>
    <name type="primary">HEATR4</name>
</gene>
<accession>Q86WZ0</accession>
<accession>B7Z7V9</accession>
<accession>E9KL41</accession>
<keyword id="KW-1267">Proteomics identification</keyword>
<keyword id="KW-1185">Reference proteome</keyword>
<keyword id="KW-0677">Repeat</keyword>
<comment type="sequence caution" evidence="2">
    <conflict type="erroneous termination">
        <sequence resource="EMBL-CDS" id="AAH47590"/>
    </conflict>
    <text>Truncated C-terminus.</text>
</comment>